<protein>
    <recommendedName>
        <fullName evidence="1">Glutamate-1-semialdehyde 2,1-aminomutase 2</fullName>
        <shortName evidence="1">GSA 2</shortName>
        <ecNumber evidence="1">5.4.3.8</ecNumber>
    </recommendedName>
    <alternativeName>
        <fullName evidence="1">Glutamate-1-semialdehyde aminotransferase 2</fullName>
        <shortName evidence="1">GSA-AT 2</shortName>
    </alternativeName>
</protein>
<gene>
    <name evidence="1" type="primary">hemL2</name>
    <name type="synonym">gsaB</name>
    <name type="ordered locus">SAB1797</name>
</gene>
<evidence type="ECO:0000255" key="1">
    <source>
        <dbReference type="HAMAP-Rule" id="MF_00375"/>
    </source>
</evidence>
<name>GSA2_STAAB</name>
<reference key="1">
    <citation type="journal article" date="2007" name="PLoS ONE">
        <title>Molecular correlates of host specialization in Staphylococcus aureus.</title>
        <authorList>
            <person name="Herron-Olson L."/>
            <person name="Fitzgerald J.R."/>
            <person name="Musser J.M."/>
            <person name="Kapur V."/>
        </authorList>
    </citation>
    <scope>NUCLEOTIDE SEQUENCE [LARGE SCALE GENOMIC DNA]</scope>
    <source>
        <strain>bovine RF122 / ET3-1</strain>
    </source>
</reference>
<accession>Q2YU22</accession>
<feature type="chain" id="PRO_0000243620" description="Glutamate-1-semialdehyde 2,1-aminomutase 2">
    <location>
        <begin position="1"/>
        <end position="429"/>
    </location>
</feature>
<feature type="modified residue" description="N6-(pyridoxal phosphate)lysine" evidence="1">
    <location>
        <position position="268"/>
    </location>
</feature>
<keyword id="KW-0963">Cytoplasm</keyword>
<keyword id="KW-0413">Isomerase</keyword>
<keyword id="KW-0627">Porphyrin biosynthesis</keyword>
<keyword id="KW-0663">Pyridoxal phosphate</keyword>
<dbReference type="EC" id="5.4.3.8" evidence="1"/>
<dbReference type="EMBL" id="AJ938182">
    <property type="protein sequence ID" value="CAI81486.1"/>
    <property type="molecule type" value="Genomic_DNA"/>
</dbReference>
<dbReference type="RefSeq" id="WP_001011614.1">
    <property type="nucleotide sequence ID" value="NC_007622.1"/>
</dbReference>
<dbReference type="SMR" id="Q2YU22"/>
<dbReference type="KEGG" id="sab:SAB1797"/>
<dbReference type="HOGENOM" id="CLU_016922_1_5_9"/>
<dbReference type="UniPathway" id="UPA00251">
    <property type="reaction ID" value="UER00317"/>
</dbReference>
<dbReference type="GO" id="GO:0005737">
    <property type="term" value="C:cytoplasm"/>
    <property type="evidence" value="ECO:0007669"/>
    <property type="project" value="UniProtKB-SubCell"/>
</dbReference>
<dbReference type="GO" id="GO:0042286">
    <property type="term" value="F:glutamate-1-semialdehyde 2,1-aminomutase activity"/>
    <property type="evidence" value="ECO:0007669"/>
    <property type="project" value="UniProtKB-UniRule"/>
</dbReference>
<dbReference type="GO" id="GO:0030170">
    <property type="term" value="F:pyridoxal phosphate binding"/>
    <property type="evidence" value="ECO:0007669"/>
    <property type="project" value="InterPro"/>
</dbReference>
<dbReference type="GO" id="GO:0008483">
    <property type="term" value="F:transaminase activity"/>
    <property type="evidence" value="ECO:0007669"/>
    <property type="project" value="InterPro"/>
</dbReference>
<dbReference type="GO" id="GO:0006782">
    <property type="term" value="P:protoporphyrinogen IX biosynthetic process"/>
    <property type="evidence" value="ECO:0007669"/>
    <property type="project" value="UniProtKB-UniRule"/>
</dbReference>
<dbReference type="CDD" id="cd00610">
    <property type="entry name" value="OAT_like"/>
    <property type="match status" value="1"/>
</dbReference>
<dbReference type="FunFam" id="3.40.640.10:FF:000021">
    <property type="entry name" value="Glutamate-1-semialdehyde 2,1-aminomutase"/>
    <property type="match status" value="1"/>
</dbReference>
<dbReference type="Gene3D" id="3.90.1150.10">
    <property type="entry name" value="Aspartate Aminotransferase, domain 1"/>
    <property type="match status" value="1"/>
</dbReference>
<dbReference type="Gene3D" id="3.40.640.10">
    <property type="entry name" value="Type I PLP-dependent aspartate aminotransferase-like (Major domain)"/>
    <property type="match status" value="1"/>
</dbReference>
<dbReference type="HAMAP" id="MF_00375">
    <property type="entry name" value="HemL_aminotrans_3"/>
    <property type="match status" value="1"/>
</dbReference>
<dbReference type="InterPro" id="IPR004639">
    <property type="entry name" value="4pyrrol_synth_GluAld_NH2Trfase"/>
</dbReference>
<dbReference type="InterPro" id="IPR005814">
    <property type="entry name" value="Aminotrans_3"/>
</dbReference>
<dbReference type="InterPro" id="IPR049704">
    <property type="entry name" value="Aminotrans_3_PPA_site"/>
</dbReference>
<dbReference type="InterPro" id="IPR015424">
    <property type="entry name" value="PyrdxlP-dep_Trfase"/>
</dbReference>
<dbReference type="InterPro" id="IPR015421">
    <property type="entry name" value="PyrdxlP-dep_Trfase_major"/>
</dbReference>
<dbReference type="InterPro" id="IPR015422">
    <property type="entry name" value="PyrdxlP-dep_Trfase_small"/>
</dbReference>
<dbReference type="NCBIfam" id="TIGR00713">
    <property type="entry name" value="hemL"/>
    <property type="match status" value="1"/>
</dbReference>
<dbReference type="NCBIfam" id="NF000818">
    <property type="entry name" value="PRK00062.1"/>
    <property type="match status" value="1"/>
</dbReference>
<dbReference type="NCBIfam" id="NF009055">
    <property type="entry name" value="PRK12389.1"/>
    <property type="match status" value="1"/>
</dbReference>
<dbReference type="PANTHER" id="PTHR43713">
    <property type="entry name" value="GLUTAMATE-1-SEMIALDEHYDE 2,1-AMINOMUTASE"/>
    <property type="match status" value="1"/>
</dbReference>
<dbReference type="PANTHER" id="PTHR43713:SF1">
    <property type="entry name" value="GLUTAMATE-1-SEMIALDEHYDE 2,1-AMINOMUTASE 2"/>
    <property type="match status" value="1"/>
</dbReference>
<dbReference type="Pfam" id="PF00202">
    <property type="entry name" value="Aminotran_3"/>
    <property type="match status" value="1"/>
</dbReference>
<dbReference type="SUPFAM" id="SSF53383">
    <property type="entry name" value="PLP-dependent transferases"/>
    <property type="match status" value="1"/>
</dbReference>
<dbReference type="PROSITE" id="PS00600">
    <property type="entry name" value="AA_TRANSFER_CLASS_3"/>
    <property type="match status" value="1"/>
</dbReference>
<organism>
    <name type="scientific">Staphylococcus aureus (strain bovine RF122 / ET3-1)</name>
    <dbReference type="NCBI Taxonomy" id="273036"/>
    <lineage>
        <taxon>Bacteria</taxon>
        <taxon>Bacillati</taxon>
        <taxon>Bacillota</taxon>
        <taxon>Bacilli</taxon>
        <taxon>Bacillales</taxon>
        <taxon>Staphylococcaceae</taxon>
        <taxon>Staphylococcus</taxon>
    </lineage>
</organism>
<proteinExistence type="inferred from homology"/>
<comment type="catalytic activity">
    <reaction evidence="1">
        <text>(S)-4-amino-5-oxopentanoate = 5-aminolevulinate</text>
        <dbReference type="Rhea" id="RHEA:14265"/>
        <dbReference type="ChEBI" id="CHEBI:57501"/>
        <dbReference type="ChEBI" id="CHEBI:356416"/>
        <dbReference type="EC" id="5.4.3.8"/>
    </reaction>
</comment>
<comment type="cofactor">
    <cofactor evidence="1">
        <name>pyridoxal 5'-phosphate</name>
        <dbReference type="ChEBI" id="CHEBI:597326"/>
    </cofactor>
</comment>
<comment type="pathway">
    <text evidence="1">Porphyrin-containing compound metabolism; protoporphyrin-IX biosynthesis; 5-aminolevulinate from L-glutamyl-tRNA(Glu): step 2/2.</text>
</comment>
<comment type="subunit">
    <text evidence="1">Homodimer.</text>
</comment>
<comment type="subcellular location">
    <subcellularLocation>
        <location evidence="1">Cytoplasm</location>
    </subcellularLocation>
</comment>
<comment type="similarity">
    <text evidence="1">Belongs to the class-III pyridoxal-phosphate-dependent aminotransferase family. HemL subfamily.</text>
</comment>
<sequence length="429" mass="46775">MNFSESERLQQLSNEYILGGVNSPSRSYKAVGGGAPVVMKEGRGAYLYDVDGNKFIDYLQAYGPIITGHAHPHITKAIQEQAAKGVLFGTPTELEIEFSKKLRDAIPSLEKIRFVNSGTEAVMTTIRVARAYTKRNKIIKFAGSYHGHSDLVLVAAGSGPSQLGSPDSAGVPESVAREVITVPFNDINAYKEAIEFWGDEIAAVLVEPIVGNFGMVMPQPGFLEEVNEISHNNGTLVIYDEVITAFRFHYGAAQDLLGVIPDLTAFGKIVGGGLPIGGYGGRQDIMEQVAPLGPAYQAGTMAGNPLSMKAGIALLEVLEQDGVYEKLDSLGQQLEEGLLKLIEKHNITATINRIYGSLTLYFTDEKVTHYDQVEHSDGEAFGKFFKLMLNQGINLAPSKFEAWFLTTEHTEEDIKQTLKAADYAFSQMK</sequence>